<dbReference type="EC" id="1.1.1.408" evidence="3"/>
<dbReference type="EMBL" id="BX640446">
    <property type="protein sequence ID" value="CAE33706.1"/>
    <property type="molecule type" value="Genomic_DNA"/>
</dbReference>
<dbReference type="SMR" id="A0A0H3LQK8"/>
<dbReference type="KEGG" id="bbr:BB3214"/>
<dbReference type="eggNOG" id="COG1995">
    <property type="taxonomic scope" value="Bacteria"/>
</dbReference>
<dbReference type="HOGENOM" id="CLU_040168_0_1_4"/>
<dbReference type="Proteomes" id="UP000001027">
    <property type="component" value="Chromosome"/>
</dbReference>
<dbReference type="GO" id="GO:0046872">
    <property type="term" value="F:metal ion binding"/>
    <property type="evidence" value="ECO:0007669"/>
    <property type="project" value="UniProtKB-KW"/>
</dbReference>
<dbReference type="GO" id="GO:0051287">
    <property type="term" value="F:NAD binding"/>
    <property type="evidence" value="ECO:0007669"/>
    <property type="project" value="InterPro"/>
</dbReference>
<dbReference type="GO" id="GO:0016491">
    <property type="term" value="F:oxidoreductase activity"/>
    <property type="evidence" value="ECO:0007669"/>
    <property type="project" value="UniProtKB-KW"/>
</dbReference>
<dbReference type="Gene3D" id="3.40.718.10">
    <property type="entry name" value="Isopropylmalate Dehydrogenase"/>
    <property type="match status" value="1"/>
</dbReference>
<dbReference type="InterPro" id="IPR005255">
    <property type="entry name" value="PdxA_fam"/>
</dbReference>
<dbReference type="NCBIfam" id="TIGR00557">
    <property type="entry name" value="pdxA"/>
    <property type="match status" value="1"/>
</dbReference>
<dbReference type="PANTHER" id="PTHR30004">
    <property type="entry name" value="4-HYDROXYTHREONINE-4-PHOSPHATE DEHYDROGENASE"/>
    <property type="match status" value="1"/>
</dbReference>
<dbReference type="PANTHER" id="PTHR30004:SF6">
    <property type="entry name" value="D-THREONATE 4-PHOSPHATE DEHYDROGENASE"/>
    <property type="match status" value="1"/>
</dbReference>
<dbReference type="Pfam" id="PF04166">
    <property type="entry name" value="PdxA"/>
    <property type="match status" value="1"/>
</dbReference>
<dbReference type="SUPFAM" id="SSF53659">
    <property type="entry name" value="Isocitrate/Isopropylmalate dehydrogenase-like"/>
    <property type="match status" value="1"/>
</dbReference>
<proteinExistence type="evidence at protein level"/>
<accession>A0A0H3LQK8</accession>
<name>PDXA2_BORBR</name>
<keyword id="KW-0119">Carbohydrate metabolism</keyword>
<keyword id="KW-0479">Metal-binding</keyword>
<keyword id="KW-0520">NAD</keyword>
<keyword id="KW-0560">Oxidoreductase</keyword>
<comment type="function">
    <text evidence="3">Catalyzes the NAD-dependent oxidation and subsequent decarboxylation of D-threonate 4-phosphate to produce dihydroxyacetone phosphate (DHAP). Can also use 4-hydroxy-L-threonine 4-phosphate as substrate.</text>
</comment>
<comment type="catalytic activity">
    <reaction evidence="3">
        <text>4-O-phospho-D-threonate + NAD(+) = dihydroxyacetone phosphate + CO2 + NADH</text>
        <dbReference type="Rhea" id="RHEA:52396"/>
        <dbReference type="ChEBI" id="CHEBI:16526"/>
        <dbReference type="ChEBI" id="CHEBI:57540"/>
        <dbReference type="ChEBI" id="CHEBI:57642"/>
        <dbReference type="ChEBI" id="CHEBI:57945"/>
        <dbReference type="ChEBI" id="CHEBI:136590"/>
        <dbReference type="EC" id="1.1.1.408"/>
    </reaction>
</comment>
<comment type="cofactor">
    <cofactor evidence="1">
        <name>a divalent metal cation</name>
        <dbReference type="ChEBI" id="CHEBI:60240"/>
    </cofactor>
    <text evidence="1">Binds 1 divalent metal cation per subunit.</text>
</comment>
<comment type="biophysicochemical properties">
    <kinetics>
        <KM evidence="3">0.037 mM for D-threonate 4-phosphate</KM>
        <KM evidence="3">0.039 mM for 4-hydroxy-L-threonine 4-phosphate</KM>
        <text evidence="3">kcat is 6.9 sec(-1) with D-threonate 4-phosphate as substrate. kcat is 2.2 sec(-1) with 4-hydroxy-L-threonine 4-phosphate as substrate.</text>
    </kinetics>
</comment>
<comment type="subunit">
    <text evidence="2">Homodimer.</text>
</comment>
<comment type="similarity">
    <text evidence="5">Belongs to the PdxA family. PdxA2 subfamily.</text>
</comment>
<organism>
    <name type="scientific">Bordetella bronchiseptica (strain ATCC BAA-588 / NCTC 13252 / RB50)</name>
    <name type="common">Alcaligenes bronchisepticus</name>
    <dbReference type="NCBI Taxonomy" id="257310"/>
    <lineage>
        <taxon>Bacteria</taxon>
        <taxon>Pseudomonadati</taxon>
        <taxon>Pseudomonadota</taxon>
        <taxon>Betaproteobacteria</taxon>
        <taxon>Burkholderiales</taxon>
        <taxon>Alcaligenaceae</taxon>
        <taxon>Bordetella</taxon>
    </lineage>
</organism>
<gene>
    <name evidence="4" type="primary">pdxA2</name>
    <name evidence="6" type="ordered locus">BB3214</name>
</gene>
<reference key="1">
    <citation type="journal article" date="2003" name="Nat. Genet.">
        <title>Comparative analysis of the genome sequences of Bordetella pertussis, Bordetella parapertussis and Bordetella bronchiseptica.</title>
        <authorList>
            <person name="Parkhill J."/>
            <person name="Sebaihia M."/>
            <person name="Preston A."/>
            <person name="Murphy L.D."/>
            <person name="Thomson N.R."/>
            <person name="Harris D.E."/>
            <person name="Holden M.T.G."/>
            <person name="Churcher C.M."/>
            <person name="Bentley S.D."/>
            <person name="Mungall K.L."/>
            <person name="Cerdeno-Tarraga A.-M."/>
            <person name="Temple L."/>
            <person name="James K.D."/>
            <person name="Harris B."/>
            <person name="Quail M.A."/>
            <person name="Achtman M."/>
            <person name="Atkin R."/>
            <person name="Baker S."/>
            <person name="Basham D."/>
            <person name="Bason N."/>
            <person name="Cherevach I."/>
            <person name="Chillingworth T."/>
            <person name="Collins M."/>
            <person name="Cronin A."/>
            <person name="Davis P."/>
            <person name="Doggett J."/>
            <person name="Feltwell T."/>
            <person name="Goble A."/>
            <person name="Hamlin N."/>
            <person name="Hauser H."/>
            <person name="Holroyd S."/>
            <person name="Jagels K."/>
            <person name="Leather S."/>
            <person name="Moule S."/>
            <person name="Norberczak H."/>
            <person name="O'Neil S."/>
            <person name="Ormond D."/>
            <person name="Price C."/>
            <person name="Rabbinowitsch E."/>
            <person name="Rutter S."/>
            <person name="Sanders M."/>
            <person name="Saunders D."/>
            <person name="Seeger K."/>
            <person name="Sharp S."/>
            <person name="Simmonds M."/>
            <person name="Skelton J."/>
            <person name="Squares R."/>
            <person name="Squares S."/>
            <person name="Stevens K."/>
            <person name="Unwin L."/>
            <person name="Whitehead S."/>
            <person name="Barrell B.G."/>
            <person name="Maskell D.J."/>
        </authorList>
    </citation>
    <scope>NUCLEOTIDE SEQUENCE [LARGE SCALE GENOMIC DNA]</scope>
    <source>
        <strain>ATCC BAA-588 / NCTC 13252 / RB50</strain>
    </source>
</reference>
<reference key="2">
    <citation type="journal article" date="2016" name="Proc. Natl. Acad. Sci. U.S.A.">
        <title>Assignment of function to a domain of unknown function: DUF1537 is a new kinase family in catabolic pathways for acid sugars.</title>
        <authorList>
            <person name="Zhang X."/>
            <person name="Carter M.S."/>
            <person name="Vetting M.W."/>
            <person name="San Francisco B."/>
            <person name="Zhao S."/>
            <person name="Al-Obaidi N.F."/>
            <person name="Solbiati J.O."/>
            <person name="Thiaville J.J."/>
            <person name="de Crecy-Lagard V."/>
            <person name="Jacobson M.P."/>
            <person name="Almo S.C."/>
            <person name="Gerlt J.A."/>
        </authorList>
    </citation>
    <scope>FUNCTION</scope>
    <scope>CATALYTIC ACTIVITY</scope>
    <scope>BIOPHYSICOCHEMICAL PROPERTIES</scope>
    <source>
        <strain>ATCC BAA-588 / NCTC 13252 / RB50</strain>
    </source>
</reference>
<evidence type="ECO:0000250" key="1">
    <source>
        <dbReference type="UniProtKB" id="P19624"/>
    </source>
</evidence>
<evidence type="ECO:0000250" key="2">
    <source>
        <dbReference type="UniProtKB" id="P58718"/>
    </source>
</evidence>
<evidence type="ECO:0000269" key="3">
    <source>
    </source>
</evidence>
<evidence type="ECO:0000303" key="4">
    <source>
    </source>
</evidence>
<evidence type="ECO:0000305" key="5"/>
<evidence type="ECO:0000312" key="6">
    <source>
        <dbReference type="EMBL" id="CAE33706.1"/>
    </source>
</evidence>
<protein>
    <recommendedName>
        <fullName evidence="4">D-threonate 4-phosphate dehydrogenase</fullName>
        <ecNumber evidence="3">1.1.1.408</ecNumber>
    </recommendedName>
</protein>
<feature type="chain" id="PRO_0000439815" description="D-threonate 4-phosphate dehydrogenase">
    <location>
        <begin position="1"/>
        <end position="351"/>
    </location>
</feature>
<feature type="binding site" evidence="1">
    <location>
        <position position="147"/>
    </location>
    <ligand>
        <name>substrate</name>
    </ligand>
</feature>
<feature type="binding site" evidence="1">
    <location>
        <position position="148"/>
    </location>
    <ligand>
        <name>substrate</name>
    </ligand>
</feature>
<feature type="binding site" evidence="1">
    <location>
        <position position="177"/>
    </location>
    <ligand>
        <name>a divalent metal cation</name>
        <dbReference type="ChEBI" id="CHEBI:60240"/>
        <note>ligand shared between dimeric partners</note>
    </ligand>
</feature>
<feature type="binding site" evidence="1">
    <location>
        <position position="221"/>
    </location>
    <ligand>
        <name>a divalent metal cation</name>
        <dbReference type="ChEBI" id="CHEBI:60240"/>
        <note>ligand shared between dimeric partners</note>
    </ligand>
</feature>
<feature type="binding site" evidence="1">
    <location>
        <position position="276"/>
    </location>
    <ligand>
        <name>a divalent metal cation</name>
        <dbReference type="ChEBI" id="CHEBI:60240"/>
        <note>ligand shared between dimeric partners</note>
    </ligand>
</feature>
<feature type="binding site" evidence="1">
    <location>
        <position position="284"/>
    </location>
    <ligand>
        <name>substrate</name>
    </ligand>
</feature>
<feature type="binding site" evidence="1">
    <location>
        <position position="293"/>
    </location>
    <ligand>
        <name>substrate</name>
    </ligand>
</feature>
<feature type="binding site" evidence="1">
    <location>
        <position position="302"/>
    </location>
    <ligand>
        <name>substrate</name>
    </ligand>
</feature>
<sequence length="351" mass="36432">MTQDATPSRIPTLAVTLGDVAGIGPEITAKMLLGHDELRQRARLLVVGDAAVLAQAVQAVGGDPARVRVIATPAEATNQPGSIEVIQAGPSLAHVPPGQLSAEAGDGSVRYVTTACALARDGLIDGIVTAPLNKAAMHMAGHKWPGHTELLAHEFGVKTFSLVLSAGDLYIFHATTHVSLRQAIEDVNPQRMRAVLRLAGSFARALGRADHPVAVAGLNPHAGENGIFGTEDAEILAPAVAQANAEGILAAGPIPADALFPQAVRGKWKFVIACYHDQGHAPFKSVYGDDGVNITVGLPVVRVSVDHGTAFDIAGKGIAREDSLVLAAERAAQLAPGWHQVWETARSTTGG</sequence>